<gene>
    <name type="primary">HOXD3</name>
    <name type="synonym">HOX1D</name>
    <name type="synonym">HOX4A</name>
</gene>
<reference key="1">
    <citation type="journal article" date="1992" name="Biochim. Biophys. Acta">
        <title>Cloning and sequencing of the human homeobox gene HOX4A.</title>
        <authorList>
            <person name="Taniguchi Y."/>
            <person name="Fujii A."/>
            <person name="Moriuchi T."/>
        </authorList>
    </citation>
    <scope>NUCLEOTIDE SEQUENCE [GENOMIC DNA]</scope>
</reference>
<reference key="2">
    <citation type="submission" date="1996-12" db="EMBL/GenBank/DDBJ databases">
        <authorList>
            <person name="Cianetti L."/>
        </authorList>
    </citation>
    <scope>NUCLEOTIDE SEQUENCE [GENOMIC DNA]</scope>
</reference>
<reference key="3">
    <citation type="journal article" date="2005" name="Nature">
        <title>Generation and annotation of the DNA sequences of human chromosomes 2 and 4.</title>
        <authorList>
            <person name="Hillier L.W."/>
            <person name="Graves T.A."/>
            <person name="Fulton R.S."/>
            <person name="Fulton L.A."/>
            <person name="Pepin K.H."/>
            <person name="Minx P."/>
            <person name="Wagner-McPherson C."/>
            <person name="Layman D."/>
            <person name="Wylie K."/>
            <person name="Sekhon M."/>
            <person name="Becker M.C."/>
            <person name="Fewell G.A."/>
            <person name="Delehaunty K.D."/>
            <person name="Miner T.L."/>
            <person name="Nash W.E."/>
            <person name="Kremitzki C."/>
            <person name="Oddy L."/>
            <person name="Du H."/>
            <person name="Sun H."/>
            <person name="Bradshaw-Cordum H."/>
            <person name="Ali J."/>
            <person name="Carter J."/>
            <person name="Cordes M."/>
            <person name="Harris A."/>
            <person name="Isak A."/>
            <person name="van Brunt A."/>
            <person name="Nguyen C."/>
            <person name="Du F."/>
            <person name="Courtney L."/>
            <person name="Kalicki J."/>
            <person name="Ozersky P."/>
            <person name="Abbott S."/>
            <person name="Armstrong J."/>
            <person name="Belter E.A."/>
            <person name="Caruso L."/>
            <person name="Cedroni M."/>
            <person name="Cotton M."/>
            <person name="Davidson T."/>
            <person name="Desai A."/>
            <person name="Elliott G."/>
            <person name="Erb T."/>
            <person name="Fronick C."/>
            <person name="Gaige T."/>
            <person name="Haakenson W."/>
            <person name="Haglund K."/>
            <person name="Holmes A."/>
            <person name="Harkins R."/>
            <person name="Kim K."/>
            <person name="Kruchowski S.S."/>
            <person name="Strong C.M."/>
            <person name="Grewal N."/>
            <person name="Goyea E."/>
            <person name="Hou S."/>
            <person name="Levy A."/>
            <person name="Martinka S."/>
            <person name="Mead K."/>
            <person name="McLellan M.D."/>
            <person name="Meyer R."/>
            <person name="Randall-Maher J."/>
            <person name="Tomlinson C."/>
            <person name="Dauphin-Kohlberg S."/>
            <person name="Kozlowicz-Reilly A."/>
            <person name="Shah N."/>
            <person name="Swearengen-Shahid S."/>
            <person name="Snider J."/>
            <person name="Strong J.T."/>
            <person name="Thompson J."/>
            <person name="Yoakum M."/>
            <person name="Leonard S."/>
            <person name="Pearman C."/>
            <person name="Trani L."/>
            <person name="Radionenko M."/>
            <person name="Waligorski J.E."/>
            <person name="Wang C."/>
            <person name="Rock S.M."/>
            <person name="Tin-Wollam A.-M."/>
            <person name="Maupin R."/>
            <person name="Latreille P."/>
            <person name="Wendl M.C."/>
            <person name="Yang S.-P."/>
            <person name="Pohl C."/>
            <person name="Wallis J.W."/>
            <person name="Spieth J."/>
            <person name="Bieri T.A."/>
            <person name="Berkowicz N."/>
            <person name="Nelson J.O."/>
            <person name="Osborne J."/>
            <person name="Ding L."/>
            <person name="Meyer R."/>
            <person name="Sabo A."/>
            <person name="Shotland Y."/>
            <person name="Sinha P."/>
            <person name="Wohldmann P.E."/>
            <person name="Cook L.L."/>
            <person name="Hickenbotham M.T."/>
            <person name="Eldred J."/>
            <person name="Williams D."/>
            <person name="Jones T.A."/>
            <person name="She X."/>
            <person name="Ciccarelli F.D."/>
            <person name="Izaurralde E."/>
            <person name="Taylor J."/>
            <person name="Schmutz J."/>
            <person name="Myers R.M."/>
            <person name="Cox D.R."/>
            <person name="Huang X."/>
            <person name="McPherson J.D."/>
            <person name="Mardis E.R."/>
            <person name="Clifton S.W."/>
            <person name="Warren W.C."/>
            <person name="Chinwalla A.T."/>
            <person name="Eddy S.R."/>
            <person name="Marra M.A."/>
            <person name="Ovcharenko I."/>
            <person name="Furey T.S."/>
            <person name="Miller W."/>
            <person name="Eichler E.E."/>
            <person name="Bork P."/>
            <person name="Suyama M."/>
            <person name="Torrents D."/>
            <person name="Waterston R.H."/>
            <person name="Wilson R.K."/>
        </authorList>
    </citation>
    <scope>NUCLEOTIDE SEQUENCE [LARGE SCALE GENOMIC DNA]</scope>
</reference>
<reference key="4">
    <citation type="journal article" date="2004" name="Genome Res.">
        <title>The status, quality, and expansion of the NIH full-length cDNA project: the Mammalian Gene Collection (MGC).</title>
        <authorList>
            <consortium name="The MGC Project Team"/>
        </authorList>
    </citation>
    <scope>NUCLEOTIDE SEQUENCE [LARGE SCALE MRNA]</scope>
    <source>
        <tissue>Brain</tissue>
        <tissue>Lung</tissue>
    </source>
</reference>
<reference key="5">
    <citation type="journal article" date="1989" name="Genome">
        <title>Organization of human class I homeobox genes.</title>
        <authorList>
            <person name="Boncinelli E."/>
            <person name="Acampora D."/>
            <person name="Pannese M."/>
            <person name="D'Esposito M."/>
            <person name="Somma R."/>
            <person name="Gaudino G."/>
            <person name="Stornaiuolo A."/>
            <person name="Cafiero M."/>
            <person name="Faiella A."/>
            <person name="Simeone A."/>
        </authorList>
    </citation>
    <scope>NUCLEOTIDE SEQUENCE [GENOMIC DNA] OF 194-259</scope>
</reference>
<feature type="chain" id="PRO_0000200204" description="Homeobox protein Hox-D3">
    <location>
        <begin position="1"/>
        <end position="432"/>
    </location>
</feature>
<feature type="DNA-binding region" description="Homeobox" evidence="1">
    <location>
        <begin position="194"/>
        <end position="253"/>
    </location>
</feature>
<feature type="region of interest" description="Disordered" evidence="2">
    <location>
        <begin position="43"/>
        <end position="62"/>
    </location>
</feature>
<feature type="region of interest" description="Disordered" evidence="2">
    <location>
        <begin position="68"/>
        <end position="197"/>
    </location>
</feature>
<feature type="region of interest" description="Disordered" evidence="2">
    <location>
        <begin position="253"/>
        <end position="280"/>
    </location>
</feature>
<feature type="region of interest" description="Disordered" evidence="2">
    <location>
        <begin position="400"/>
        <end position="432"/>
    </location>
</feature>
<feature type="short sequence motif" description="Antp-type hexapeptide">
    <location>
        <begin position="160"/>
        <end position="165"/>
    </location>
</feature>
<feature type="compositionally biased region" description="Gly residues" evidence="2">
    <location>
        <begin position="97"/>
        <end position="106"/>
    </location>
</feature>
<feature type="compositionally biased region" description="Pro residues" evidence="2">
    <location>
        <begin position="116"/>
        <end position="131"/>
    </location>
</feature>
<feature type="compositionally biased region" description="Polar residues" evidence="2">
    <location>
        <begin position="148"/>
        <end position="158"/>
    </location>
</feature>
<feature type="sequence variant" id="VAR_011881" description="In dbSNP:rs1051932.">
    <original>S</original>
    <variation>C</variation>
    <location>
        <position position="129"/>
    </location>
</feature>
<feature type="sequence conflict" description="In Ref. 5." evidence="3" ref="5">
    <original>G</original>
    <variation>A</variation>
    <location>
        <position position="257"/>
    </location>
</feature>
<proteinExistence type="evidence at protein level"/>
<evidence type="ECO:0000255" key="1">
    <source>
        <dbReference type="PROSITE-ProRule" id="PRU00108"/>
    </source>
</evidence>
<evidence type="ECO:0000256" key="2">
    <source>
        <dbReference type="SAM" id="MobiDB-lite"/>
    </source>
</evidence>
<evidence type="ECO:0000305" key="3"/>
<organism>
    <name type="scientific">Homo sapiens</name>
    <name type="common">Human</name>
    <dbReference type="NCBI Taxonomy" id="9606"/>
    <lineage>
        <taxon>Eukaryota</taxon>
        <taxon>Metazoa</taxon>
        <taxon>Chordata</taxon>
        <taxon>Craniata</taxon>
        <taxon>Vertebrata</taxon>
        <taxon>Euteleostomi</taxon>
        <taxon>Mammalia</taxon>
        <taxon>Eutheria</taxon>
        <taxon>Euarchontoglires</taxon>
        <taxon>Primates</taxon>
        <taxon>Haplorrhini</taxon>
        <taxon>Catarrhini</taxon>
        <taxon>Hominidae</taxon>
        <taxon>Homo</taxon>
    </lineage>
</organism>
<keyword id="KW-0217">Developmental protein</keyword>
<keyword id="KW-0238">DNA-binding</keyword>
<keyword id="KW-0371">Homeobox</keyword>
<keyword id="KW-0539">Nucleus</keyword>
<keyword id="KW-1267">Proteomics identification</keyword>
<keyword id="KW-1185">Reference proteome</keyword>
<keyword id="KW-0804">Transcription</keyword>
<keyword id="KW-0805">Transcription regulation</keyword>
<name>HXD3_HUMAN</name>
<sequence>MLFEQGQQALELPECTMQKAAYYENPGLFGGYGYSKTTDTYGYSTPHQPYPPPAAASSLDTDYPGSACSIQSSAPLRAPAHKGAELNGSCMRPGTGNSQGGGGGSQPPGLNSEQQPPQPPPPPPTLPPSSPTNPGGGVPAKKPKGGPNASSSSATISKQIFPWMKESRQNSKQKNSCATAGESCEDKSPPGPASKRVRTAYTSAQLVELEKEFHFNRYLCRPRRVEMANLLNLTERQIKIWFQNRRMKYKKDQKAKGILHSPASQSPERSPPLGGAAGHVAYSGQLPPVPGLAYDAPSPPAFAKSQPNMYGLAAYTAPLSSCLPQQKRYAAPEFEPHPMASNGGGFASANLQGSPVYVGGNFVESMAPASGPVFNLGHLSHPSSASVDYSCAAQIPGNHHHGPCDPHPTYTDLSAHHSSQGRLPEAPKLTHL</sequence>
<comment type="function">
    <text>Sequence-specific transcription factor which is part of a developmental regulatory system that provides cells with specific positional identities on the anterior-posterior axis.</text>
</comment>
<comment type="interaction">
    <interactant intactId="EBI-3957655">
        <id>P31249</id>
    </interactant>
    <interactant intactId="EBI-1752118">
        <id>P31273</id>
        <label>HOXC8</label>
    </interactant>
    <organismsDiffer>false</organismsDiffer>
    <experiments>3</experiments>
</comment>
<comment type="interaction">
    <interactant intactId="EBI-3957655">
        <id>P31249</id>
    </interactant>
    <interactant intactId="EBI-11955401">
        <id>Q86VF2-5</id>
        <label>IGFN1</label>
    </interactant>
    <organismsDiffer>false</organismsDiffer>
    <experiments>3</experiments>
</comment>
<comment type="interaction">
    <interactant intactId="EBI-3957655">
        <id>P31249</id>
    </interactant>
    <interactant intactId="EBI-10271199">
        <id>Q8NI38</id>
        <label>NFKBID</label>
    </interactant>
    <organismsDiffer>false</organismsDiffer>
    <experiments>3</experiments>
</comment>
<comment type="interaction">
    <interactant intactId="EBI-3957655">
        <id>P31249</id>
    </interactant>
    <interactant intactId="EBI-358489">
        <id>Q96GM5</id>
        <label>SMARCD1</label>
    </interactant>
    <organismsDiffer>false</organismsDiffer>
    <experiments>3</experiments>
</comment>
<comment type="interaction">
    <interactant intactId="EBI-3957655">
        <id>P31249</id>
    </interactant>
    <interactant intactId="EBI-3957603">
        <id>P09022</id>
        <label>Hoxa1</label>
    </interactant>
    <organismsDiffer>true</organismsDiffer>
    <experiments>3</experiments>
</comment>
<comment type="subcellular location">
    <subcellularLocation>
        <location>Nucleus</location>
    </subcellularLocation>
</comment>
<comment type="similarity">
    <text evidence="3">Belongs to the Antp homeobox family.</text>
</comment>
<comment type="caution">
    <text evidence="3">It is uncertain whether Met-1 or Met-17 is the initiator.</text>
</comment>
<comment type="sequence caution" evidence="3">
    <conflict type="erroneous initiation">
        <sequence resource="EMBL-CDS" id="BAA01891"/>
    </conflict>
</comment>
<dbReference type="EMBL" id="D11117">
    <property type="protein sequence ID" value="BAA01891.1"/>
    <property type="status" value="ALT_INIT"/>
    <property type="molecule type" value="Genomic_DNA"/>
</dbReference>
<dbReference type="EMBL" id="Y09980">
    <property type="protein sequence ID" value="CAA71102.1"/>
    <property type="molecule type" value="Genomic_DNA"/>
</dbReference>
<dbReference type="EMBL" id="AC009336">
    <property type="status" value="NOT_ANNOTATED_CDS"/>
    <property type="molecule type" value="Genomic_DNA"/>
</dbReference>
<dbReference type="EMBL" id="BC005124">
    <property type="protein sequence ID" value="AAH05124.1"/>
    <property type="molecule type" value="mRNA"/>
</dbReference>
<dbReference type="EMBL" id="BC008789">
    <property type="protein sequence ID" value="AAH08789.1"/>
    <property type="molecule type" value="mRNA"/>
</dbReference>
<dbReference type="CCDS" id="CCDS2270.1"/>
<dbReference type="PIR" id="S15548">
    <property type="entry name" value="S15548"/>
</dbReference>
<dbReference type="PIR" id="S27198">
    <property type="entry name" value="S27198"/>
</dbReference>
<dbReference type="RefSeq" id="NP_008829.3">
    <property type="nucleotide sequence ID" value="NM_006898.4"/>
</dbReference>
<dbReference type="RefSeq" id="XP_005246566.1">
    <property type="nucleotide sequence ID" value="XM_005246509.5"/>
</dbReference>
<dbReference type="RefSeq" id="XP_005246567.1">
    <property type="nucleotide sequence ID" value="XM_005246510.4"/>
</dbReference>
<dbReference type="RefSeq" id="XP_005246568.1">
    <property type="nucleotide sequence ID" value="XM_005246511.5"/>
</dbReference>
<dbReference type="RefSeq" id="XP_005246570.1">
    <property type="nucleotide sequence ID" value="XM_005246513.4"/>
</dbReference>
<dbReference type="RefSeq" id="XP_006712540.1">
    <property type="nucleotide sequence ID" value="XM_006712477.2"/>
</dbReference>
<dbReference type="RefSeq" id="XP_011509367.1">
    <property type="nucleotide sequence ID" value="XM_011511065.4"/>
</dbReference>
<dbReference type="RefSeq" id="XP_011509368.1">
    <property type="nucleotide sequence ID" value="XM_011511066.4"/>
</dbReference>
<dbReference type="RefSeq" id="XP_047300043.1">
    <property type="nucleotide sequence ID" value="XM_047444087.1"/>
</dbReference>
<dbReference type="RefSeq" id="XP_047300044.1">
    <property type="nucleotide sequence ID" value="XM_047444088.1"/>
</dbReference>
<dbReference type="RefSeq" id="XP_047300045.1">
    <property type="nucleotide sequence ID" value="XM_047444089.1"/>
</dbReference>
<dbReference type="RefSeq" id="XP_047300046.1">
    <property type="nucleotide sequence ID" value="XM_047444090.1"/>
</dbReference>
<dbReference type="RefSeq" id="XP_047300048.1">
    <property type="nucleotide sequence ID" value="XM_047444092.1"/>
</dbReference>
<dbReference type="RefSeq" id="XP_054197626.1">
    <property type="nucleotide sequence ID" value="XM_054341651.1"/>
</dbReference>
<dbReference type="RefSeq" id="XP_054197627.1">
    <property type="nucleotide sequence ID" value="XM_054341652.1"/>
</dbReference>
<dbReference type="RefSeq" id="XP_054197628.1">
    <property type="nucleotide sequence ID" value="XM_054341653.1"/>
</dbReference>
<dbReference type="RefSeq" id="XP_054197629.1">
    <property type="nucleotide sequence ID" value="XM_054341654.1"/>
</dbReference>
<dbReference type="RefSeq" id="XP_054197630.1">
    <property type="nucleotide sequence ID" value="XM_054341655.1"/>
</dbReference>
<dbReference type="RefSeq" id="XP_054197631.1">
    <property type="nucleotide sequence ID" value="XM_054341656.1"/>
</dbReference>
<dbReference type="RefSeq" id="XP_054197632.1">
    <property type="nucleotide sequence ID" value="XM_054341657.1"/>
</dbReference>
<dbReference type="RefSeq" id="XP_054197633.1">
    <property type="nucleotide sequence ID" value="XM_054341658.1"/>
</dbReference>
<dbReference type="SMR" id="P31249"/>
<dbReference type="BioGRID" id="109472">
    <property type="interactions" value="14"/>
</dbReference>
<dbReference type="FunCoup" id="P31249">
    <property type="interactions" value="1060"/>
</dbReference>
<dbReference type="IntAct" id="P31249">
    <property type="interactions" value="11"/>
</dbReference>
<dbReference type="MINT" id="P31249"/>
<dbReference type="STRING" id="9606.ENSP00000386498"/>
<dbReference type="iPTMnet" id="P31249"/>
<dbReference type="PhosphoSitePlus" id="P31249"/>
<dbReference type="BioMuta" id="HOXD3"/>
<dbReference type="DMDM" id="224471887"/>
<dbReference type="jPOST" id="P31249"/>
<dbReference type="MassIVE" id="P31249"/>
<dbReference type="PaxDb" id="9606-ENSP00000386498"/>
<dbReference type="PeptideAtlas" id="P31249"/>
<dbReference type="ProteomicsDB" id="54765"/>
<dbReference type="Antibodypedia" id="19525">
    <property type="antibodies" value="206 antibodies from 24 providers"/>
</dbReference>
<dbReference type="DNASU" id="3232"/>
<dbReference type="Ensembl" id="ENST00000249440.4">
    <property type="protein sequence ID" value="ENSP00000249440.2"/>
    <property type="gene ID" value="ENSG00000128652.12"/>
</dbReference>
<dbReference type="Ensembl" id="ENST00000410016.5">
    <property type="protein sequence ID" value="ENSP00000386498.1"/>
    <property type="gene ID" value="ENSG00000128652.12"/>
</dbReference>
<dbReference type="Ensembl" id="ENST00000683222.1">
    <property type="protein sequence ID" value="ENSP00000507129.1"/>
    <property type="gene ID" value="ENSG00000128652.12"/>
</dbReference>
<dbReference type="GeneID" id="3232"/>
<dbReference type="KEGG" id="hsa:3232"/>
<dbReference type="MANE-Select" id="ENST00000683222.1">
    <property type="protein sequence ID" value="ENSP00000507129.1"/>
    <property type="RefSeq nucleotide sequence ID" value="NM_006898.5"/>
    <property type="RefSeq protein sequence ID" value="NP_008829.3"/>
</dbReference>
<dbReference type="UCSC" id="uc002ukt.2">
    <property type="organism name" value="human"/>
</dbReference>
<dbReference type="AGR" id="HGNC:5137"/>
<dbReference type="CTD" id="3232"/>
<dbReference type="DisGeNET" id="3232"/>
<dbReference type="GeneCards" id="HOXD3"/>
<dbReference type="HGNC" id="HGNC:5137">
    <property type="gene designation" value="HOXD3"/>
</dbReference>
<dbReference type="HPA" id="ENSG00000128652">
    <property type="expression patterns" value="Tissue enriched (epididymis)"/>
</dbReference>
<dbReference type="MalaCards" id="HOXD3"/>
<dbReference type="MIM" id="142980">
    <property type="type" value="gene"/>
</dbReference>
<dbReference type="neXtProt" id="NX_P31249"/>
<dbReference type="OpenTargets" id="ENSG00000128652"/>
<dbReference type="PharmGKB" id="PA29411"/>
<dbReference type="VEuPathDB" id="HostDB:ENSG00000128652"/>
<dbReference type="eggNOG" id="KOG0489">
    <property type="taxonomic scope" value="Eukaryota"/>
</dbReference>
<dbReference type="GeneTree" id="ENSGT00940000160027"/>
<dbReference type="HOGENOM" id="CLU_051508_1_0_1"/>
<dbReference type="InParanoid" id="P31249"/>
<dbReference type="OMA" id="YPYGAAH"/>
<dbReference type="OrthoDB" id="6159439at2759"/>
<dbReference type="PAN-GO" id="P31249">
    <property type="GO annotations" value="6 GO annotations based on evolutionary models"/>
</dbReference>
<dbReference type="PhylomeDB" id="P31249"/>
<dbReference type="TreeFam" id="TF315938"/>
<dbReference type="PathwayCommons" id="P31249"/>
<dbReference type="Reactome" id="R-HSA-5617472">
    <property type="pathway name" value="Activation of anterior HOX genes in hindbrain development during early embryogenesis"/>
</dbReference>
<dbReference type="SignaLink" id="P31249"/>
<dbReference type="SIGNOR" id="P31249"/>
<dbReference type="BioGRID-ORCS" id="3232">
    <property type="hits" value="12 hits in 1170 CRISPR screens"/>
</dbReference>
<dbReference type="GeneWiki" id="HOXD3"/>
<dbReference type="GenomeRNAi" id="3232"/>
<dbReference type="Pharos" id="P31249">
    <property type="development level" value="Tbio"/>
</dbReference>
<dbReference type="PRO" id="PR:P31249"/>
<dbReference type="Proteomes" id="UP000005640">
    <property type="component" value="Chromosome 2"/>
</dbReference>
<dbReference type="RNAct" id="P31249">
    <property type="molecule type" value="protein"/>
</dbReference>
<dbReference type="Bgee" id="ENSG00000128652">
    <property type="expression patterns" value="Expressed in corpus epididymis and 106 other cell types or tissues"/>
</dbReference>
<dbReference type="ExpressionAtlas" id="P31249">
    <property type="expression patterns" value="baseline and differential"/>
</dbReference>
<dbReference type="GO" id="GO:0016235">
    <property type="term" value="C:aggresome"/>
    <property type="evidence" value="ECO:0000314"/>
    <property type="project" value="HPA"/>
</dbReference>
<dbReference type="GO" id="GO:0000785">
    <property type="term" value="C:chromatin"/>
    <property type="evidence" value="ECO:0000247"/>
    <property type="project" value="NTNU_SB"/>
</dbReference>
<dbReference type="GO" id="GO:0016604">
    <property type="term" value="C:nuclear body"/>
    <property type="evidence" value="ECO:0000314"/>
    <property type="project" value="HPA"/>
</dbReference>
<dbReference type="GO" id="GO:0005654">
    <property type="term" value="C:nucleoplasm"/>
    <property type="evidence" value="ECO:0000314"/>
    <property type="project" value="HPA"/>
</dbReference>
<dbReference type="GO" id="GO:0005634">
    <property type="term" value="C:nucleus"/>
    <property type="evidence" value="ECO:0000318"/>
    <property type="project" value="GO_Central"/>
</dbReference>
<dbReference type="GO" id="GO:0001228">
    <property type="term" value="F:DNA-binding transcription activator activity, RNA polymerase II-specific"/>
    <property type="evidence" value="ECO:0000314"/>
    <property type="project" value="NTNU_SB"/>
</dbReference>
<dbReference type="GO" id="GO:0000981">
    <property type="term" value="F:DNA-binding transcription factor activity, RNA polymerase II-specific"/>
    <property type="evidence" value="ECO:0000247"/>
    <property type="project" value="NTNU_SB"/>
</dbReference>
<dbReference type="GO" id="GO:0000978">
    <property type="term" value="F:RNA polymerase II cis-regulatory region sequence-specific DNA binding"/>
    <property type="evidence" value="ECO:0000318"/>
    <property type="project" value="GO_Central"/>
</dbReference>
<dbReference type="GO" id="GO:0000977">
    <property type="term" value="F:RNA polymerase II transcription regulatory region sequence-specific DNA binding"/>
    <property type="evidence" value="ECO:0000314"/>
    <property type="project" value="NTNU_SB"/>
</dbReference>
<dbReference type="GO" id="GO:1990837">
    <property type="term" value="F:sequence-specific double-stranded DNA binding"/>
    <property type="evidence" value="ECO:0000314"/>
    <property type="project" value="ARUK-UCL"/>
</dbReference>
<dbReference type="GO" id="GO:0009952">
    <property type="term" value="P:anterior/posterior pattern specification"/>
    <property type="evidence" value="ECO:0000250"/>
    <property type="project" value="UniProtKB"/>
</dbReference>
<dbReference type="GO" id="GO:0051216">
    <property type="term" value="P:cartilage development"/>
    <property type="evidence" value="ECO:0000250"/>
    <property type="project" value="UniProtKB"/>
</dbReference>
<dbReference type="GO" id="GO:0007160">
    <property type="term" value="P:cell-matrix adhesion"/>
    <property type="evidence" value="ECO:0000314"/>
    <property type="project" value="UniProtKB"/>
</dbReference>
<dbReference type="GO" id="GO:0006351">
    <property type="term" value="P:DNA-templated transcription"/>
    <property type="evidence" value="ECO:0000315"/>
    <property type="project" value="UniProtKB"/>
</dbReference>
<dbReference type="GO" id="GO:0048704">
    <property type="term" value="P:embryonic skeletal system morphogenesis"/>
    <property type="evidence" value="ECO:0000250"/>
    <property type="project" value="UniProtKB"/>
</dbReference>
<dbReference type="GO" id="GO:0021615">
    <property type="term" value="P:glossopharyngeal nerve morphogenesis"/>
    <property type="evidence" value="ECO:0007669"/>
    <property type="project" value="Ensembl"/>
</dbReference>
<dbReference type="GO" id="GO:0007219">
    <property type="term" value="P:Notch signaling pathway"/>
    <property type="evidence" value="ECO:0000315"/>
    <property type="project" value="UniProtKB"/>
</dbReference>
<dbReference type="GO" id="GO:0010628">
    <property type="term" value="P:positive regulation of gene expression"/>
    <property type="evidence" value="ECO:0000315"/>
    <property type="project" value="UniProtKB"/>
</dbReference>
<dbReference type="GO" id="GO:0045666">
    <property type="term" value="P:positive regulation of neuron differentiation"/>
    <property type="evidence" value="ECO:0000250"/>
    <property type="project" value="UniProtKB"/>
</dbReference>
<dbReference type="GO" id="GO:0045944">
    <property type="term" value="P:positive regulation of transcription by RNA polymerase II"/>
    <property type="evidence" value="ECO:0000314"/>
    <property type="project" value="NTNU_SB"/>
</dbReference>
<dbReference type="GO" id="GO:0006357">
    <property type="term" value="P:regulation of transcription by RNA polymerase II"/>
    <property type="evidence" value="ECO:0000318"/>
    <property type="project" value="GO_Central"/>
</dbReference>
<dbReference type="GO" id="GO:0030878">
    <property type="term" value="P:thyroid gland development"/>
    <property type="evidence" value="ECO:0000250"/>
    <property type="project" value="UniProtKB"/>
</dbReference>
<dbReference type="CDD" id="cd00086">
    <property type="entry name" value="homeodomain"/>
    <property type="match status" value="1"/>
</dbReference>
<dbReference type="FunFam" id="1.10.10.60:FF:000094">
    <property type="entry name" value="Homeobox protein Hox-A3"/>
    <property type="match status" value="1"/>
</dbReference>
<dbReference type="Gene3D" id="1.10.10.60">
    <property type="entry name" value="Homeodomain-like"/>
    <property type="match status" value="1"/>
</dbReference>
<dbReference type="InterPro" id="IPR025281">
    <property type="entry name" value="DUF4074"/>
</dbReference>
<dbReference type="InterPro" id="IPR001356">
    <property type="entry name" value="HD"/>
</dbReference>
<dbReference type="InterPro" id="IPR020479">
    <property type="entry name" value="HD_metazoa"/>
</dbReference>
<dbReference type="InterPro" id="IPR001827">
    <property type="entry name" value="Homeobox_Antennapedia_CS"/>
</dbReference>
<dbReference type="InterPro" id="IPR017970">
    <property type="entry name" value="Homeobox_CS"/>
</dbReference>
<dbReference type="InterPro" id="IPR009057">
    <property type="entry name" value="Homeodomain-like_sf"/>
</dbReference>
<dbReference type="PANTHER" id="PTHR45664:SF5">
    <property type="entry name" value="HOMEOBOX PROTEIN HOX-D3"/>
    <property type="match status" value="1"/>
</dbReference>
<dbReference type="PANTHER" id="PTHR45664">
    <property type="entry name" value="PROTEIN ZERKNUELLT 1-RELATED"/>
    <property type="match status" value="1"/>
</dbReference>
<dbReference type="Pfam" id="PF13293">
    <property type="entry name" value="DUF4074"/>
    <property type="match status" value="1"/>
</dbReference>
<dbReference type="Pfam" id="PF00046">
    <property type="entry name" value="Homeodomain"/>
    <property type="match status" value="1"/>
</dbReference>
<dbReference type="PRINTS" id="PR00024">
    <property type="entry name" value="HOMEOBOX"/>
</dbReference>
<dbReference type="SMART" id="SM00389">
    <property type="entry name" value="HOX"/>
    <property type="match status" value="1"/>
</dbReference>
<dbReference type="SUPFAM" id="SSF46689">
    <property type="entry name" value="Homeodomain-like"/>
    <property type="match status" value="1"/>
</dbReference>
<dbReference type="PROSITE" id="PS00032">
    <property type="entry name" value="ANTENNAPEDIA"/>
    <property type="match status" value="1"/>
</dbReference>
<dbReference type="PROSITE" id="PS00027">
    <property type="entry name" value="HOMEOBOX_1"/>
    <property type="match status" value="1"/>
</dbReference>
<dbReference type="PROSITE" id="PS50071">
    <property type="entry name" value="HOMEOBOX_2"/>
    <property type="match status" value="1"/>
</dbReference>
<accession>P31249</accession>
<accession>Q99955</accession>
<accession>Q9BSC5</accession>
<protein>
    <recommendedName>
        <fullName>Homeobox protein Hox-D3</fullName>
    </recommendedName>
    <alternativeName>
        <fullName>Homeobox protein Hox-4A</fullName>
    </alternativeName>
</protein>